<feature type="chain" id="PRO_1000067230" description="L-ectoine synthase">
    <location>
        <begin position="1"/>
        <end position="132"/>
    </location>
</feature>
<accession>Q2SLV8</accession>
<proteinExistence type="inferred from homology"/>
<organism>
    <name type="scientific">Hahella chejuensis (strain KCTC 2396)</name>
    <dbReference type="NCBI Taxonomy" id="349521"/>
    <lineage>
        <taxon>Bacteria</taxon>
        <taxon>Pseudomonadati</taxon>
        <taxon>Pseudomonadota</taxon>
        <taxon>Gammaproteobacteria</taxon>
        <taxon>Oceanospirillales</taxon>
        <taxon>Hahellaceae</taxon>
        <taxon>Hahella</taxon>
    </lineage>
</organism>
<dbReference type="EC" id="4.2.1.108" evidence="1"/>
<dbReference type="EMBL" id="CP000155">
    <property type="protein sequence ID" value="ABC28366.1"/>
    <property type="molecule type" value="Genomic_DNA"/>
</dbReference>
<dbReference type="RefSeq" id="WP_011395439.1">
    <property type="nucleotide sequence ID" value="NC_007645.1"/>
</dbReference>
<dbReference type="SMR" id="Q2SLV8"/>
<dbReference type="STRING" id="349521.HCH_01508"/>
<dbReference type="KEGG" id="hch:HCH_01508"/>
<dbReference type="eggNOG" id="COG1917">
    <property type="taxonomic scope" value="Bacteria"/>
</dbReference>
<dbReference type="HOGENOM" id="CLU_154525_0_0_6"/>
<dbReference type="OrthoDB" id="9801830at2"/>
<dbReference type="UniPathway" id="UPA00067">
    <property type="reaction ID" value="UER00123"/>
</dbReference>
<dbReference type="Proteomes" id="UP000000238">
    <property type="component" value="Chromosome"/>
</dbReference>
<dbReference type="GO" id="GO:0033990">
    <property type="term" value="F:ectoine synthase activity"/>
    <property type="evidence" value="ECO:0007669"/>
    <property type="project" value="UniProtKB-EC"/>
</dbReference>
<dbReference type="GO" id="GO:0019491">
    <property type="term" value="P:ectoine biosynthetic process"/>
    <property type="evidence" value="ECO:0007669"/>
    <property type="project" value="UniProtKB-UniRule"/>
</dbReference>
<dbReference type="CDD" id="cd06978">
    <property type="entry name" value="cupin_EctC"/>
    <property type="match status" value="1"/>
</dbReference>
<dbReference type="Gene3D" id="2.60.120.10">
    <property type="entry name" value="Jelly Rolls"/>
    <property type="match status" value="1"/>
</dbReference>
<dbReference type="HAMAP" id="MF_01255">
    <property type="entry name" value="Ectoine_synth"/>
    <property type="match status" value="1"/>
</dbReference>
<dbReference type="InterPro" id="IPR010462">
    <property type="entry name" value="Ectoine_synth"/>
</dbReference>
<dbReference type="InterPro" id="IPR014710">
    <property type="entry name" value="RmlC-like_jellyroll"/>
</dbReference>
<dbReference type="InterPro" id="IPR011051">
    <property type="entry name" value="RmlC_Cupin_sf"/>
</dbReference>
<dbReference type="NCBIfam" id="NF009806">
    <property type="entry name" value="PRK13290.1"/>
    <property type="match status" value="1"/>
</dbReference>
<dbReference type="PANTHER" id="PTHR39289">
    <property type="match status" value="1"/>
</dbReference>
<dbReference type="PANTHER" id="PTHR39289:SF1">
    <property type="entry name" value="L-ECTOINE SYNTHASE"/>
    <property type="match status" value="1"/>
</dbReference>
<dbReference type="Pfam" id="PF06339">
    <property type="entry name" value="Ectoine_synth"/>
    <property type="match status" value="1"/>
</dbReference>
<dbReference type="SUPFAM" id="SSF51182">
    <property type="entry name" value="RmlC-like cupins"/>
    <property type="match status" value="1"/>
</dbReference>
<sequence>MIVRTLEQARQSDRRVKADNWESVRMLLKDDNMGFSFHITTLYANKETPIHYQNHLESVYCISGEGEVETVADGEVHAIKPGTLYVLDKHDKHLLRAFSEMTVACVFNPPLNGKETHDENGVYPLEAETIME</sequence>
<keyword id="KW-0456">Lyase</keyword>
<keyword id="KW-1185">Reference proteome</keyword>
<gene>
    <name evidence="1" type="primary">ectC</name>
    <name type="ordered locus">HCH_01508</name>
</gene>
<protein>
    <recommendedName>
        <fullName evidence="1">L-ectoine synthase</fullName>
        <ecNumber evidence="1">4.2.1.108</ecNumber>
    </recommendedName>
    <alternativeName>
        <fullName evidence="1">N-acetyldiaminobutyrate dehydratase</fullName>
    </alternativeName>
</protein>
<reference key="1">
    <citation type="journal article" date="2005" name="Nucleic Acids Res.">
        <title>Genomic blueprint of Hahella chejuensis, a marine microbe producing an algicidal agent.</title>
        <authorList>
            <person name="Jeong H."/>
            <person name="Yim J.H."/>
            <person name="Lee C."/>
            <person name="Choi S.-H."/>
            <person name="Park Y.K."/>
            <person name="Yoon S.H."/>
            <person name="Hur C.-G."/>
            <person name="Kang H.-Y."/>
            <person name="Kim D."/>
            <person name="Lee H.H."/>
            <person name="Park K.H."/>
            <person name="Park S.-H."/>
            <person name="Park H.-S."/>
            <person name="Lee H.K."/>
            <person name="Oh T.K."/>
            <person name="Kim J.F."/>
        </authorList>
    </citation>
    <scope>NUCLEOTIDE SEQUENCE [LARGE SCALE GENOMIC DNA]</scope>
    <source>
        <strain>KCTC 2396</strain>
    </source>
</reference>
<comment type="function">
    <text evidence="1">Catalyzes the circularization of gamma-N-acetyl-alpha,gamma-diaminobutyric acid (ADABA) to ectoine (1,4,5,6-tetrahydro-2-methyl-4-pyrimidine carboxylic acid), which is an excellent osmoprotectant.</text>
</comment>
<comment type="catalytic activity">
    <reaction evidence="1">
        <text>(2S)-4-acetamido-2-aminobutanoate = L-ectoine + H2O</text>
        <dbReference type="Rhea" id="RHEA:17281"/>
        <dbReference type="ChEBI" id="CHEBI:15377"/>
        <dbReference type="ChEBI" id="CHEBI:58515"/>
        <dbReference type="ChEBI" id="CHEBI:58929"/>
        <dbReference type="EC" id="4.2.1.108"/>
    </reaction>
</comment>
<comment type="pathway">
    <text evidence="1">Amine and polyamine biosynthesis; ectoine biosynthesis; L-ectoine from L-aspartate 4-semialdehyde: step 3/3.</text>
</comment>
<comment type="similarity">
    <text evidence="1">Belongs to the ectoine synthase family.</text>
</comment>
<evidence type="ECO:0000255" key="1">
    <source>
        <dbReference type="HAMAP-Rule" id="MF_01255"/>
    </source>
</evidence>
<name>ECTC_HAHCH</name>